<proteinExistence type="inferred from homology"/>
<sequence length="306" mass="34583">MEVTFFGTSAGLPTKERNTQAIALNLEPYSNSIWLFDVGEGTQHQILHHAIKLGKVTHIFITHMHGDHIFGLPGLLSSRSFQGGEQKPLTLVGPKGIKAYVEMSMNLSESHLNYPITYIEIDDHLTYHHDGFTVEAHLLNHGIPSYGYRVMAPETTGTINVEALKNIGLEPGPKYQEVKSHDTFEHNGQVYQSKDFRGESKQGPVVAIFGDTKPCSNERVISRDADVMVHEATYIDGEKHLANNYHHSHIEDVFALIKEANVKRTLITHLSNRYNTEDINEIYQILIQNEDTPNFNFVKDFDSFKV</sequence>
<feature type="chain" id="PRO_1000088343" description="Ribonuclease Z">
    <location>
        <begin position="1"/>
        <end position="306"/>
    </location>
</feature>
<feature type="active site" description="Proton acceptor" evidence="1">
    <location>
        <position position="67"/>
    </location>
</feature>
<feature type="binding site" evidence="1">
    <location>
        <position position="63"/>
    </location>
    <ligand>
        <name>Zn(2+)</name>
        <dbReference type="ChEBI" id="CHEBI:29105"/>
        <label>1</label>
        <note>catalytic</note>
    </ligand>
</feature>
<feature type="binding site" evidence="1">
    <location>
        <position position="65"/>
    </location>
    <ligand>
        <name>Zn(2+)</name>
        <dbReference type="ChEBI" id="CHEBI:29105"/>
        <label>1</label>
        <note>catalytic</note>
    </ligand>
</feature>
<feature type="binding site" evidence="1">
    <location>
        <position position="67"/>
    </location>
    <ligand>
        <name>Zn(2+)</name>
        <dbReference type="ChEBI" id="CHEBI:29105"/>
        <label>2</label>
        <note>catalytic</note>
    </ligand>
</feature>
<feature type="binding site" evidence="1">
    <location>
        <position position="68"/>
    </location>
    <ligand>
        <name>Zn(2+)</name>
        <dbReference type="ChEBI" id="CHEBI:29105"/>
        <label>2</label>
        <note>catalytic</note>
    </ligand>
</feature>
<feature type="binding site" evidence="1">
    <location>
        <position position="141"/>
    </location>
    <ligand>
        <name>Zn(2+)</name>
        <dbReference type="ChEBI" id="CHEBI:29105"/>
        <label>1</label>
        <note>catalytic</note>
    </ligand>
</feature>
<feature type="binding site" evidence="1">
    <location>
        <position position="211"/>
    </location>
    <ligand>
        <name>Zn(2+)</name>
        <dbReference type="ChEBI" id="CHEBI:29105"/>
        <label>1</label>
        <note>catalytic</note>
    </ligand>
</feature>
<feature type="binding site" evidence="1">
    <location>
        <position position="211"/>
    </location>
    <ligand>
        <name>Zn(2+)</name>
        <dbReference type="ChEBI" id="CHEBI:29105"/>
        <label>2</label>
        <note>catalytic</note>
    </ligand>
</feature>
<feature type="binding site" evidence="1">
    <location>
        <position position="269"/>
    </location>
    <ligand>
        <name>Zn(2+)</name>
        <dbReference type="ChEBI" id="CHEBI:29105"/>
        <label>2</label>
        <note>catalytic</note>
    </ligand>
</feature>
<reference key="1">
    <citation type="submission" date="2007-05" db="EMBL/GenBank/DDBJ databases">
        <title>Complete sequence of chromosome of Staphylococcus aureus subsp. aureus JH9.</title>
        <authorList>
            <consortium name="US DOE Joint Genome Institute"/>
            <person name="Copeland A."/>
            <person name="Lucas S."/>
            <person name="Lapidus A."/>
            <person name="Barry K."/>
            <person name="Detter J.C."/>
            <person name="Glavina del Rio T."/>
            <person name="Hammon N."/>
            <person name="Israni S."/>
            <person name="Pitluck S."/>
            <person name="Chain P."/>
            <person name="Malfatti S."/>
            <person name="Shin M."/>
            <person name="Vergez L."/>
            <person name="Schmutz J."/>
            <person name="Larimer F."/>
            <person name="Land M."/>
            <person name="Hauser L."/>
            <person name="Kyrpides N."/>
            <person name="Kim E."/>
            <person name="Tomasz A."/>
            <person name="Richardson P."/>
        </authorList>
    </citation>
    <scope>NUCLEOTIDE SEQUENCE [LARGE SCALE GENOMIC DNA]</scope>
    <source>
        <strain>JH9</strain>
    </source>
</reference>
<accession>A5IT32</accession>
<name>RNZ_STAA9</name>
<gene>
    <name evidence="1" type="primary">rnz</name>
    <name type="ordered locus">SaurJH9_1561</name>
</gene>
<comment type="function">
    <text evidence="1">Zinc phosphodiesterase, which displays some tRNA 3'-processing endonuclease activity. Probably involved in tRNA maturation, by removing a 3'-trailer from precursor tRNA.</text>
</comment>
<comment type="catalytic activity">
    <reaction evidence="1">
        <text>Endonucleolytic cleavage of RNA, removing extra 3' nucleotides from tRNA precursor, generating 3' termini of tRNAs. A 3'-hydroxy group is left at the tRNA terminus and a 5'-phosphoryl group is left at the trailer molecule.</text>
        <dbReference type="EC" id="3.1.26.11"/>
    </reaction>
</comment>
<comment type="cofactor">
    <cofactor evidence="1">
        <name>Zn(2+)</name>
        <dbReference type="ChEBI" id="CHEBI:29105"/>
    </cofactor>
    <text evidence="1">Binds 2 Zn(2+) ions.</text>
</comment>
<comment type="subunit">
    <text evidence="1">Homodimer.</text>
</comment>
<comment type="similarity">
    <text evidence="1">Belongs to the RNase Z family.</text>
</comment>
<protein>
    <recommendedName>
        <fullName evidence="1">Ribonuclease Z</fullName>
        <shortName evidence="1">RNase Z</shortName>
        <ecNumber evidence="1">3.1.26.11</ecNumber>
    </recommendedName>
    <alternativeName>
        <fullName evidence="1">tRNA 3 endonuclease</fullName>
    </alternativeName>
    <alternativeName>
        <fullName evidence="1">tRNase Z</fullName>
    </alternativeName>
</protein>
<keyword id="KW-0255">Endonuclease</keyword>
<keyword id="KW-0378">Hydrolase</keyword>
<keyword id="KW-0479">Metal-binding</keyword>
<keyword id="KW-0540">Nuclease</keyword>
<keyword id="KW-0819">tRNA processing</keyword>
<keyword id="KW-0862">Zinc</keyword>
<evidence type="ECO:0000255" key="1">
    <source>
        <dbReference type="HAMAP-Rule" id="MF_01818"/>
    </source>
</evidence>
<organism>
    <name type="scientific">Staphylococcus aureus (strain JH9)</name>
    <dbReference type="NCBI Taxonomy" id="359786"/>
    <lineage>
        <taxon>Bacteria</taxon>
        <taxon>Bacillati</taxon>
        <taxon>Bacillota</taxon>
        <taxon>Bacilli</taxon>
        <taxon>Bacillales</taxon>
        <taxon>Staphylococcaceae</taxon>
        <taxon>Staphylococcus</taxon>
    </lineage>
</organism>
<dbReference type="EC" id="3.1.26.11" evidence="1"/>
<dbReference type="EMBL" id="CP000703">
    <property type="protein sequence ID" value="ABQ49355.1"/>
    <property type="molecule type" value="Genomic_DNA"/>
</dbReference>
<dbReference type="RefSeq" id="WP_000454063.1">
    <property type="nucleotide sequence ID" value="NC_009487.1"/>
</dbReference>
<dbReference type="SMR" id="A5IT32"/>
<dbReference type="KEGG" id="saj:SaurJH9_1561"/>
<dbReference type="HOGENOM" id="CLU_031317_2_0_9"/>
<dbReference type="GO" id="GO:0042781">
    <property type="term" value="F:3'-tRNA processing endoribonuclease activity"/>
    <property type="evidence" value="ECO:0007669"/>
    <property type="project" value="UniProtKB-UniRule"/>
</dbReference>
<dbReference type="GO" id="GO:0008270">
    <property type="term" value="F:zinc ion binding"/>
    <property type="evidence" value="ECO:0007669"/>
    <property type="project" value="UniProtKB-UniRule"/>
</dbReference>
<dbReference type="CDD" id="cd07717">
    <property type="entry name" value="RNaseZ_ZiPD-like_MBL-fold"/>
    <property type="match status" value="1"/>
</dbReference>
<dbReference type="FunFam" id="3.60.15.10:FF:000002">
    <property type="entry name" value="Ribonuclease Z"/>
    <property type="match status" value="1"/>
</dbReference>
<dbReference type="Gene3D" id="3.60.15.10">
    <property type="entry name" value="Ribonuclease Z/Hydroxyacylglutathione hydrolase-like"/>
    <property type="match status" value="1"/>
</dbReference>
<dbReference type="HAMAP" id="MF_01818">
    <property type="entry name" value="RNase_Z_BN"/>
    <property type="match status" value="1"/>
</dbReference>
<dbReference type="InterPro" id="IPR036866">
    <property type="entry name" value="RibonucZ/Hydroxyglut_hydro"/>
</dbReference>
<dbReference type="InterPro" id="IPR013471">
    <property type="entry name" value="RNase_Z/BN"/>
</dbReference>
<dbReference type="InterPro" id="IPR027794">
    <property type="entry name" value="tRNase_Z_dom"/>
</dbReference>
<dbReference type="NCBIfam" id="NF000801">
    <property type="entry name" value="PRK00055.1-3"/>
    <property type="match status" value="1"/>
</dbReference>
<dbReference type="NCBIfam" id="TIGR02651">
    <property type="entry name" value="RNase_Z"/>
    <property type="match status" value="1"/>
</dbReference>
<dbReference type="PANTHER" id="PTHR46018">
    <property type="entry name" value="ZINC PHOSPHODIESTERASE ELAC PROTEIN 1"/>
    <property type="match status" value="1"/>
</dbReference>
<dbReference type="PANTHER" id="PTHR46018:SF2">
    <property type="entry name" value="ZINC PHOSPHODIESTERASE ELAC PROTEIN 1"/>
    <property type="match status" value="1"/>
</dbReference>
<dbReference type="Pfam" id="PF13691">
    <property type="entry name" value="Lactamase_B_4"/>
    <property type="match status" value="1"/>
</dbReference>
<dbReference type="SUPFAM" id="SSF56281">
    <property type="entry name" value="Metallo-hydrolase/oxidoreductase"/>
    <property type="match status" value="1"/>
</dbReference>